<sequence length="157" mass="17464">MGIMLDETDKAILRDLQEDASISNLNLSKKIGLSPSACLARTKNLVEAGIIKKFTTIVDEKKLGIEVTALALINLSPLNRETIHSFLEDINKFPQVQECYTLTGSHDYMLKIVAKDMESYRNFIIDSLMQNPAISGVDTSIVMSTEKRTVSVPIDEM</sequence>
<evidence type="ECO:0000255" key="1">
    <source>
        <dbReference type="PROSITE-ProRule" id="PRU00319"/>
    </source>
</evidence>
<name>AZLB_BACSU</name>
<proteinExistence type="predicted"/>
<protein>
    <recommendedName>
        <fullName>Transcriptional regulator AzlB</fullName>
    </recommendedName>
</protein>
<organism>
    <name type="scientific">Bacillus subtilis (strain 168)</name>
    <dbReference type="NCBI Taxonomy" id="224308"/>
    <lineage>
        <taxon>Bacteria</taxon>
        <taxon>Bacillati</taxon>
        <taxon>Bacillota</taxon>
        <taxon>Bacilli</taxon>
        <taxon>Bacillales</taxon>
        <taxon>Bacillaceae</taxon>
        <taxon>Bacillus</taxon>
    </lineage>
</organism>
<keyword id="KW-0238">DNA-binding</keyword>
<keyword id="KW-1185">Reference proteome</keyword>
<keyword id="KW-0678">Repressor</keyword>
<keyword id="KW-0804">Transcription</keyword>
<keyword id="KW-0805">Transcription regulation</keyword>
<dbReference type="EMBL" id="Y11043">
    <property type="protein sequence ID" value="CAA71939.1"/>
    <property type="molecule type" value="Genomic_DNA"/>
</dbReference>
<dbReference type="EMBL" id="U93876">
    <property type="protein sequence ID" value="AAB80900.1"/>
    <property type="molecule type" value="Genomic_DNA"/>
</dbReference>
<dbReference type="EMBL" id="AL009126">
    <property type="protein sequence ID" value="CAB14613.1"/>
    <property type="molecule type" value="Genomic_DNA"/>
</dbReference>
<dbReference type="PIR" id="F69592">
    <property type="entry name" value="F69592"/>
</dbReference>
<dbReference type="RefSeq" id="NP_390549.1">
    <property type="nucleotide sequence ID" value="NC_000964.3"/>
</dbReference>
<dbReference type="RefSeq" id="WP_004399001.1">
    <property type="nucleotide sequence ID" value="NZ_OZ025638.1"/>
</dbReference>
<dbReference type="SMR" id="O07920"/>
<dbReference type="FunCoup" id="O07920">
    <property type="interactions" value="101"/>
</dbReference>
<dbReference type="STRING" id="224308.BSU26720"/>
<dbReference type="PaxDb" id="224308-BSU26720"/>
<dbReference type="EnsemblBacteria" id="CAB14613">
    <property type="protein sequence ID" value="CAB14613"/>
    <property type="gene ID" value="BSU_26720"/>
</dbReference>
<dbReference type="GeneID" id="937625"/>
<dbReference type="KEGG" id="bsu:BSU26720"/>
<dbReference type="PATRIC" id="fig|224308.179.peg.2902"/>
<dbReference type="eggNOG" id="COG1522">
    <property type="taxonomic scope" value="Bacteria"/>
</dbReference>
<dbReference type="InParanoid" id="O07920"/>
<dbReference type="OrthoDB" id="34294at2"/>
<dbReference type="PhylomeDB" id="O07920"/>
<dbReference type="BioCyc" id="BSUB:BSU26720-MONOMER"/>
<dbReference type="Proteomes" id="UP000001570">
    <property type="component" value="Chromosome"/>
</dbReference>
<dbReference type="GO" id="GO:0005829">
    <property type="term" value="C:cytosol"/>
    <property type="evidence" value="ECO:0000318"/>
    <property type="project" value="GO_Central"/>
</dbReference>
<dbReference type="GO" id="GO:0043565">
    <property type="term" value="F:sequence-specific DNA binding"/>
    <property type="evidence" value="ECO:0000318"/>
    <property type="project" value="GO_Central"/>
</dbReference>
<dbReference type="GO" id="GO:0043200">
    <property type="term" value="P:response to amino acid"/>
    <property type="evidence" value="ECO:0000318"/>
    <property type="project" value="GO_Central"/>
</dbReference>
<dbReference type="CDD" id="cd00090">
    <property type="entry name" value="HTH_ARSR"/>
    <property type="match status" value="1"/>
</dbReference>
<dbReference type="FunFam" id="3.30.70.920:FF:000029">
    <property type="entry name" value="ArsR family transcriptional regulator"/>
    <property type="match status" value="1"/>
</dbReference>
<dbReference type="Gene3D" id="3.30.70.920">
    <property type="match status" value="1"/>
</dbReference>
<dbReference type="Gene3D" id="1.10.10.10">
    <property type="entry name" value="Winged helix-like DNA-binding domain superfamily/Winged helix DNA-binding domain"/>
    <property type="match status" value="1"/>
</dbReference>
<dbReference type="InterPro" id="IPR011991">
    <property type="entry name" value="ArsR-like_HTH"/>
</dbReference>
<dbReference type="InterPro" id="IPR000485">
    <property type="entry name" value="AsnC-type_HTH_dom"/>
</dbReference>
<dbReference type="InterPro" id="IPR011008">
    <property type="entry name" value="Dimeric_a/b-barrel"/>
</dbReference>
<dbReference type="InterPro" id="IPR019888">
    <property type="entry name" value="Tscrpt_reg_AsnC-like"/>
</dbReference>
<dbReference type="InterPro" id="IPR019887">
    <property type="entry name" value="Tscrpt_reg_AsnC/Lrp_C"/>
</dbReference>
<dbReference type="InterPro" id="IPR019885">
    <property type="entry name" value="Tscrpt_reg_HTH_AsnC-type_CS"/>
</dbReference>
<dbReference type="InterPro" id="IPR036388">
    <property type="entry name" value="WH-like_DNA-bd_sf"/>
</dbReference>
<dbReference type="InterPro" id="IPR036390">
    <property type="entry name" value="WH_DNA-bd_sf"/>
</dbReference>
<dbReference type="PANTHER" id="PTHR30154">
    <property type="entry name" value="LEUCINE-RESPONSIVE REGULATORY PROTEIN"/>
    <property type="match status" value="1"/>
</dbReference>
<dbReference type="PANTHER" id="PTHR30154:SF34">
    <property type="entry name" value="TRANSCRIPTIONAL REGULATOR AZLB"/>
    <property type="match status" value="1"/>
</dbReference>
<dbReference type="Pfam" id="PF01037">
    <property type="entry name" value="AsnC_trans_reg"/>
    <property type="match status" value="1"/>
</dbReference>
<dbReference type="Pfam" id="PF13412">
    <property type="entry name" value="HTH_24"/>
    <property type="match status" value="1"/>
</dbReference>
<dbReference type="PRINTS" id="PR00033">
    <property type="entry name" value="HTHASNC"/>
</dbReference>
<dbReference type="SMART" id="SM00344">
    <property type="entry name" value="HTH_ASNC"/>
    <property type="match status" value="1"/>
</dbReference>
<dbReference type="SUPFAM" id="SSF54909">
    <property type="entry name" value="Dimeric alpha+beta barrel"/>
    <property type="match status" value="1"/>
</dbReference>
<dbReference type="SUPFAM" id="SSF46785">
    <property type="entry name" value="Winged helix' DNA-binding domain"/>
    <property type="match status" value="1"/>
</dbReference>
<dbReference type="PROSITE" id="PS00519">
    <property type="entry name" value="HTH_ASNC_1"/>
    <property type="match status" value="1"/>
</dbReference>
<dbReference type="PROSITE" id="PS50956">
    <property type="entry name" value="HTH_ASNC_2"/>
    <property type="match status" value="1"/>
</dbReference>
<accession>O07920</accession>
<feature type="chain" id="PRO_0000111724" description="Transcriptional regulator AzlB">
    <location>
        <begin position="1"/>
        <end position="157"/>
    </location>
</feature>
<feature type="domain" description="HTH asnC-type" evidence="1">
    <location>
        <begin position="5"/>
        <end position="66"/>
    </location>
</feature>
<feature type="DNA-binding region" description="H-T-H motif" evidence="1">
    <location>
        <begin position="24"/>
        <end position="43"/>
    </location>
</feature>
<comment type="function">
    <text>Transcriptional repressor of the azlBCD operon involved in branched-chain amino acid transport.</text>
</comment>
<gene>
    <name type="primary">azlB</name>
    <name type="synonym">yrdG</name>
    <name type="ordered locus">BSU26720</name>
</gene>
<reference key="1">
    <citation type="journal article" date="1997" name="J. Bacteriol.">
        <title>An lrp-like gene of Bacillus subtilis involved in branched-chain amino acid transport.</title>
        <authorList>
            <person name="Belitsky B.R."/>
            <person name="Gustafsson M.C.U."/>
            <person name="Sonenshein A.L."/>
            <person name="von Wachenfeldt C."/>
        </authorList>
    </citation>
    <scope>NUCLEOTIDE SEQUENCE [GENOMIC DNA]</scope>
    <source>
        <strain>168 / BGSC1A1</strain>
    </source>
</reference>
<reference key="2">
    <citation type="journal article" date="1997" name="Microbiology">
        <title>Sequence of the Bacillus subtilis genome region in the vicinity of the lev operon reveals two new extracytoplasmic function RNA polymerase sigma factors SigV and SigZ.</title>
        <authorList>
            <person name="Sorokin A."/>
            <person name="Bolotin A."/>
            <person name="Purnelle B."/>
            <person name="Hilbert H."/>
            <person name="Lauber J."/>
            <person name="Duesterhoeft A."/>
            <person name="Ehrlich S.D."/>
        </authorList>
    </citation>
    <scope>NUCLEOTIDE SEQUENCE [GENOMIC DNA]</scope>
    <source>
        <strain>168</strain>
    </source>
</reference>
<reference key="3">
    <citation type="journal article" date="1997" name="Nature">
        <title>The complete genome sequence of the Gram-positive bacterium Bacillus subtilis.</title>
        <authorList>
            <person name="Kunst F."/>
            <person name="Ogasawara N."/>
            <person name="Moszer I."/>
            <person name="Albertini A.M."/>
            <person name="Alloni G."/>
            <person name="Azevedo V."/>
            <person name="Bertero M.G."/>
            <person name="Bessieres P."/>
            <person name="Bolotin A."/>
            <person name="Borchert S."/>
            <person name="Borriss R."/>
            <person name="Boursier L."/>
            <person name="Brans A."/>
            <person name="Braun M."/>
            <person name="Brignell S.C."/>
            <person name="Bron S."/>
            <person name="Brouillet S."/>
            <person name="Bruschi C.V."/>
            <person name="Caldwell B."/>
            <person name="Capuano V."/>
            <person name="Carter N.M."/>
            <person name="Choi S.-K."/>
            <person name="Codani J.-J."/>
            <person name="Connerton I.F."/>
            <person name="Cummings N.J."/>
            <person name="Daniel R.A."/>
            <person name="Denizot F."/>
            <person name="Devine K.M."/>
            <person name="Duesterhoeft A."/>
            <person name="Ehrlich S.D."/>
            <person name="Emmerson P.T."/>
            <person name="Entian K.-D."/>
            <person name="Errington J."/>
            <person name="Fabret C."/>
            <person name="Ferrari E."/>
            <person name="Foulger D."/>
            <person name="Fritz C."/>
            <person name="Fujita M."/>
            <person name="Fujita Y."/>
            <person name="Fuma S."/>
            <person name="Galizzi A."/>
            <person name="Galleron N."/>
            <person name="Ghim S.-Y."/>
            <person name="Glaser P."/>
            <person name="Goffeau A."/>
            <person name="Golightly E.J."/>
            <person name="Grandi G."/>
            <person name="Guiseppi G."/>
            <person name="Guy B.J."/>
            <person name="Haga K."/>
            <person name="Haiech J."/>
            <person name="Harwood C.R."/>
            <person name="Henaut A."/>
            <person name="Hilbert H."/>
            <person name="Holsappel S."/>
            <person name="Hosono S."/>
            <person name="Hullo M.-F."/>
            <person name="Itaya M."/>
            <person name="Jones L.-M."/>
            <person name="Joris B."/>
            <person name="Karamata D."/>
            <person name="Kasahara Y."/>
            <person name="Klaerr-Blanchard M."/>
            <person name="Klein C."/>
            <person name="Kobayashi Y."/>
            <person name="Koetter P."/>
            <person name="Koningstein G."/>
            <person name="Krogh S."/>
            <person name="Kumano M."/>
            <person name="Kurita K."/>
            <person name="Lapidus A."/>
            <person name="Lardinois S."/>
            <person name="Lauber J."/>
            <person name="Lazarevic V."/>
            <person name="Lee S.-M."/>
            <person name="Levine A."/>
            <person name="Liu H."/>
            <person name="Masuda S."/>
            <person name="Mauel C."/>
            <person name="Medigue C."/>
            <person name="Medina N."/>
            <person name="Mellado R.P."/>
            <person name="Mizuno M."/>
            <person name="Moestl D."/>
            <person name="Nakai S."/>
            <person name="Noback M."/>
            <person name="Noone D."/>
            <person name="O'Reilly M."/>
            <person name="Ogawa K."/>
            <person name="Ogiwara A."/>
            <person name="Oudega B."/>
            <person name="Park S.-H."/>
            <person name="Parro V."/>
            <person name="Pohl T.M."/>
            <person name="Portetelle D."/>
            <person name="Porwollik S."/>
            <person name="Prescott A.M."/>
            <person name="Presecan E."/>
            <person name="Pujic P."/>
            <person name="Purnelle B."/>
            <person name="Rapoport G."/>
            <person name="Rey M."/>
            <person name="Reynolds S."/>
            <person name="Rieger M."/>
            <person name="Rivolta C."/>
            <person name="Rocha E."/>
            <person name="Roche B."/>
            <person name="Rose M."/>
            <person name="Sadaie Y."/>
            <person name="Sato T."/>
            <person name="Scanlan E."/>
            <person name="Schleich S."/>
            <person name="Schroeter R."/>
            <person name="Scoffone F."/>
            <person name="Sekiguchi J."/>
            <person name="Sekowska A."/>
            <person name="Seror S.J."/>
            <person name="Serror P."/>
            <person name="Shin B.-S."/>
            <person name="Soldo B."/>
            <person name="Sorokin A."/>
            <person name="Tacconi E."/>
            <person name="Takagi T."/>
            <person name="Takahashi H."/>
            <person name="Takemaru K."/>
            <person name="Takeuchi M."/>
            <person name="Tamakoshi A."/>
            <person name="Tanaka T."/>
            <person name="Terpstra P."/>
            <person name="Tognoni A."/>
            <person name="Tosato V."/>
            <person name="Uchiyama S."/>
            <person name="Vandenbol M."/>
            <person name="Vannier F."/>
            <person name="Vassarotti A."/>
            <person name="Viari A."/>
            <person name="Wambutt R."/>
            <person name="Wedler E."/>
            <person name="Wedler H."/>
            <person name="Weitzenegger T."/>
            <person name="Winters P."/>
            <person name="Wipat A."/>
            <person name="Yamamoto H."/>
            <person name="Yamane K."/>
            <person name="Yasumoto K."/>
            <person name="Yata K."/>
            <person name="Yoshida K."/>
            <person name="Yoshikawa H.-F."/>
            <person name="Zumstein E."/>
            <person name="Yoshikawa H."/>
            <person name="Danchin A."/>
        </authorList>
    </citation>
    <scope>NUCLEOTIDE SEQUENCE [LARGE SCALE GENOMIC DNA]</scope>
    <source>
        <strain>168</strain>
    </source>
</reference>